<comment type="function">
    <text evidence="1">Catalyzes the thiamine diphosphate-dependent decarboxylation of 2-oxoglutarate and the subsequent addition of the resulting succinic semialdehyde-thiamine pyrophosphate anion to isochorismate to yield 2-succinyl-5-enolpyruvyl-6-hydroxy-3-cyclohexene-1-carboxylate (SEPHCHC).</text>
</comment>
<comment type="catalytic activity">
    <reaction evidence="1">
        <text>isochorismate + 2-oxoglutarate + H(+) = 5-enolpyruvoyl-6-hydroxy-2-succinyl-cyclohex-3-ene-1-carboxylate + CO2</text>
        <dbReference type="Rhea" id="RHEA:25593"/>
        <dbReference type="ChEBI" id="CHEBI:15378"/>
        <dbReference type="ChEBI" id="CHEBI:16526"/>
        <dbReference type="ChEBI" id="CHEBI:16810"/>
        <dbReference type="ChEBI" id="CHEBI:29780"/>
        <dbReference type="ChEBI" id="CHEBI:58818"/>
        <dbReference type="EC" id="2.2.1.9"/>
    </reaction>
</comment>
<comment type="cofactor">
    <cofactor evidence="1">
        <name>Mg(2+)</name>
        <dbReference type="ChEBI" id="CHEBI:18420"/>
    </cofactor>
    <cofactor evidence="1">
        <name>Mn(2+)</name>
        <dbReference type="ChEBI" id="CHEBI:29035"/>
    </cofactor>
</comment>
<comment type="cofactor">
    <cofactor evidence="1">
        <name>thiamine diphosphate</name>
        <dbReference type="ChEBI" id="CHEBI:58937"/>
    </cofactor>
    <text evidence="1">Binds 1 thiamine pyrophosphate per subunit.</text>
</comment>
<comment type="pathway">
    <text evidence="1">Quinol/quinone metabolism; 1,4-dihydroxy-2-naphthoate biosynthesis; 1,4-dihydroxy-2-naphthoate from chorismate: step 2/7.</text>
</comment>
<comment type="pathway">
    <text evidence="1">Quinol/quinone metabolism; menaquinone biosynthesis.</text>
</comment>
<comment type="subunit">
    <text evidence="1">Homodimer.</text>
</comment>
<comment type="similarity">
    <text evidence="1">Belongs to the TPP enzyme family. MenD subfamily.</text>
</comment>
<evidence type="ECO:0000255" key="1">
    <source>
        <dbReference type="HAMAP-Rule" id="MF_01659"/>
    </source>
</evidence>
<name>MEND_CROS8</name>
<reference key="1">
    <citation type="journal article" date="2010" name="PLoS ONE">
        <title>Genome sequence of Cronobacter sakazakii BAA-894 and comparative genomic hybridization analysis with other Cronobacter species.</title>
        <authorList>
            <person name="Kucerova E."/>
            <person name="Clifton S.W."/>
            <person name="Xia X.Q."/>
            <person name="Long F."/>
            <person name="Porwollik S."/>
            <person name="Fulton L."/>
            <person name="Fronick C."/>
            <person name="Minx P."/>
            <person name="Kyung K."/>
            <person name="Warren W."/>
            <person name="Fulton R."/>
            <person name="Feng D."/>
            <person name="Wollam A."/>
            <person name="Shah N."/>
            <person name="Bhonagiri V."/>
            <person name="Nash W.E."/>
            <person name="Hallsworth-Pepin K."/>
            <person name="Wilson R.K."/>
            <person name="McClelland M."/>
            <person name="Forsythe S.J."/>
        </authorList>
    </citation>
    <scope>NUCLEOTIDE SEQUENCE [LARGE SCALE GENOMIC DNA]</scope>
    <source>
        <strain>ATCC BAA-894</strain>
    </source>
</reference>
<sequence>MSTSTFNRRWAGVILEALSRHGVRHLCIAPGSRSTPLTLAAAQHPAFTPHTHFDERGLGHLALGLAKASGEPVAVIVTSGTAVANLYPAVIEAGLTGEKLVVITADRPPELIDCGANQAIRQHSIFGSHPAATLDLPRPTPSIPAAWLISAIDETMGALAAGALHINTPFAEPLYGELDETDLTWQQAPGEWWQTTTPWLRYEKIQAVSAQADWPFWREQRGVVLAGRLTAQEGEAVAQWAARLGWPLIGDVLSQTGQPLPCADLWLAHPRAAALLAQAPVVVQFGGSLTGKRVLQWQSECRPQEYWVVDPLPGRLDPAHHRGRRIVADISAWLEQHPAHPMMPWDEPLEGLAAQTQRIVARELTEWGEAQVAHRLPELLPPDGQLFLGNSLTVRLVDALAQLPAGYPVYGNRGASGIDGLVSTAAGVQRATGKPTLAVLGDLSTLYDLNALALLRDAPAPFVLIVVNNNGGQIFSMLPTPAREREKFYCMPQNVCFAPAAAMFSLNYDAPESLAALKEAVTRAWRSSVATVIELRVPETAGAQVFSRLLKAVCA</sequence>
<protein>
    <recommendedName>
        <fullName evidence="1">2-succinyl-5-enolpyruvyl-6-hydroxy-3-cyclohexene-1-carboxylate synthase</fullName>
        <shortName evidence="1">SEPHCHC synthase</shortName>
        <ecNumber evidence="1">2.2.1.9</ecNumber>
    </recommendedName>
    <alternativeName>
        <fullName evidence="1">Menaquinone biosynthesis protein MenD</fullName>
    </alternativeName>
</protein>
<accession>A7MHU4</accession>
<dbReference type="EC" id="2.2.1.9" evidence="1"/>
<dbReference type="EMBL" id="CP000783">
    <property type="protein sequence ID" value="ABU76219.1"/>
    <property type="molecule type" value="Genomic_DNA"/>
</dbReference>
<dbReference type="RefSeq" id="WP_012124166.1">
    <property type="nucleotide sequence ID" value="NC_009778.1"/>
</dbReference>
<dbReference type="SMR" id="A7MHU4"/>
<dbReference type="KEGG" id="esa:ESA_00949"/>
<dbReference type="PATRIC" id="fig|290339.8.peg.847"/>
<dbReference type="HOGENOM" id="CLU_006051_3_0_6"/>
<dbReference type="UniPathway" id="UPA00079"/>
<dbReference type="UniPathway" id="UPA01057">
    <property type="reaction ID" value="UER00164"/>
</dbReference>
<dbReference type="Proteomes" id="UP000000260">
    <property type="component" value="Chromosome"/>
</dbReference>
<dbReference type="GO" id="GO:0070204">
    <property type="term" value="F:2-succinyl-5-enolpyruvyl-6-hydroxy-3-cyclohexene-1-carboxylic-acid synthase activity"/>
    <property type="evidence" value="ECO:0007669"/>
    <property type="project" value="UniProtKB-UniRule"/>
</dbReference>
<dbReference type="GO" id="GO:0000287">
    <property type="term" value="F:magnesium ion binding"/>
    <property type="evidence" value="ECO:0007669"/>
    <property type="project" value="UniProtKB-UniRule"/>
</dbReference>
<dbReference type="GO" id="GO:0030145">
    <property type="term" value="F:manganese ion binding"/>
    <property type="evidence" value="ECO:0007669"/>
    <property type="project" value="UniProtKB-UniRule"/>
</dbReference>
<dbReference type="GO" id="GO:0030976">
    <property type="term" value="F:thiamine pyrophosphate binding"/>
    <property type="evidence" value="ECO:0007669"/>
    <property type="project" value="UniProtKB-UniRule"/>
</dbReference>
<dbReference type="GO" id="GO:0009234">
    <property type="term" value="P:menaquinone biosynthetic process"/>
    <property type="evidence" value="ECO:0007669"/>
    <property type="project" value="UniProtKB-UniRule"/>
</dbReference>
<dbReference type="CDD" id="cd07037">
    <property type="entry name" value="TPP_PYR_MenD"/>
    <property type="match status" value="1"/>
</dbReference>
<dbReference type="CDD" id="cd02009">
    <property type="entry name" value="TPP_SHCHC_synthase"/>
    <property type="match status" value="1"/>
</dbReference>
<dbReference type="FunFam" id="3.40.50.970:FF:000029">
    <property type="entry name" value="2-succinyl-5-enolpyruvyl-6-hydroxy-3-cyclohexene-1-carboxylate synthase"/>
    <property type="match status" value="1"/>
</dbReference>
<dbReference type="Gene3D" id="3.40.50.970">
    <property type="match status" value="2"/>
</dbReference>
<dbReference type="Gene3D" id="3.40.50.1220">
    <property type="entry name" value="TPP-binding domain"/>
    <property type="match status" value="1"/>
</dbReference>
<dbReference type="HAMAP" id="MF_01659">
    <property type="entry name" value="MenD"/>
    <property type="match status" value="1"/>
</dbReference>
<dbReference type="InterPro" id="IPR029035">
    <property type="entry name" value="DHS-like_NAD/FAD-binding_dom"/>
</dbReference>
<dbReference type="InterPro" id="IPR004433">
    <property type="entry name" value="MenaQ_synth_MenD"/>
</dbReference>
<dbReference type="InterPro" id="IPR032264">
    <property type="entry name" value="MenD_middle"/>
</dbReference>
<dbReference type="InterPro" id="IPR029061">
    <property type="entry name" value="THDP-binding"/>
</dbReference>
<dbReference type="InterPro" id="IPR012001">
    <property type="entry name" value="Thiamin_PyroP_enz_TPP-bd_dom"/>
</dbReference>
<dbReference type="InterPro" id="IPR011766">
    <property type="entry name" value="TPP_enzyme_TPP-bd"/>
</dbReference>
<dbReference type="NCBIfam" id="TIGR00173">
    <property type="entry name" value="menD"/>
    <property type="match status" value="1"/>
</dbReference>
<dbReference type="PANTHER" id="PTHR42916">
    <property type="entry name" value="2-SUCCINYL-5-ENOLPYRUVYL-6-HYDROXY-3-CYCLOHEXENE-1-CARBOXYLATE SYNTHASE"/>
    <property type="match status" value="1"/>
</dbReference>
<dbReference type="PANTHER" id="PTHR42916:SF1">
    <property type="entry name" value="PROTEIN PHYLLO, CHLOROPLASTIC"/>
    <property type="match status" value="1"/>
</dbReference>
<dbReference type="Pfam" id="PF02775">
    <property type="entry name" value="TPP_enzyme_C"/>
    <property type="match status" value="1"/>
</dbReference>
<dbReference type="Pfam" id="PF16582">
    <property type="entry name" value="TPP_enzyme_M_2"/>
    <property type="match status" value="1"/>
</dbReference>
<dbReference type="Pfam" id="PF02776">
    <property type="entry name" value="TPP_enzyme_N"/>
    <property type="match status" value="1"/>
</dbReference>
<dbReference type="PIRSF" id="PIRSF004983">
    <property type="entry name" value="MenD"/>
    <property type="match status" value="1"/>
</dbReference>
<dbReference type="SUPFAM" id="SSF52467">
    <property type="entry name" value="DHS-like NAD/FAD-binding domain"/>
    <property type="match status" value="1"/>
</dbReference>
<dbReference type="SUPFAM" id="SSF52518">
    <property type="entry name" value="Thiamin diphosphate-binding fold (THDP-binding)"/>
    <property type="match status" value="2"/>
</dbReference>
<proteinExistence type="inferred from homology"/>
<keyword id="KW-0460">Magnesium</keyword>
<keyword id="KW-0464">Manganese</keyword>
<keyword id="KW-0474">Menaquinone biosynthesis</keyword>
<keyword id="KW-0479">Metal-binding</keyword>
<keyword id="KW-1185">Reference proteome</keyword>
<keyword id="KW-0786">Thiamine pyrophosphate</keyword>
<keyword id="KW-0808">Transferase</keyword>
<organism>
    <name type="scientific">Cronobacter sakazakii (strain ATCC BAA-894)</name>
    <name type="common">Enterobacter sakazakii</name>
    <dbReference type="NCBI Taxonomy" id="290339"/>
    <lineage>
        <taxon>Bacteria</taxon>
        <taxon>Pseudomonadati</taxon>
        <taxon>Pseudomonadota</taxon>
        <taxon>Gammaproteobacteria</taxon>
        <taxon>Enterobacterales</taxon>
        <taxon>Enterobacteriaceae</taxon>
        <taxon>Cronobacter</taxon>
    </lineage>
</organism>
<feature type="chain" id="PRO_0000341734" description="2-succinyl-5-enolpyruvyl-6-hydroxy-3-cyclohexene-1-carboxylate synthase">
    <location>
        <begin position="1"/>
        <end position="555"/>
    </location>
</feature>
<gene>
    <name evidence="1" type="primary">menD</name>
    <name type="ordered locus">ESA_00949</name>
</gene>